<comment type="function">
    <text evidence="1">The alpha subunit is responsible for the aldol cleavage of indoleglycerol phosphate to indole and glyceraldehyde 3-phosphate.</text>
</comment>
<comment type="catalytic activity">
    <reaction evidence="1">
        <text>(1S,2R)-1-C-(indol-3-yl)glycerol 3-phosphate + L-serine = D-glyceraldehyde 3-phosphate + L-tryptophan + H2O</text>
        <dbReference type="Rhea" id="RHEA:10532"/>
        <dbReference type="ChEBI" id="CHEBI:15377"/>
        <dbReference type="ChEBI" id="CHEBI:33384"/>
        <dbReference type="ChEBI" id="CHEBI:57912"/>
        <dbReference type="ChEBI" id="CHEBI:58866"/>
        <dbReference type="ChEBI" id="CHEBI:59776"/>
        <dbReference type="EC" id="4.2.1.20"/>
    </reaction>
</comment>
<comment type="pathway">
    <text evidence="1">Amino-acid biosynthesis; L-tryptophan biosynthesis; L-tryptophan from chorismate: step 5/5.</text>
</comment>
<comment type="subunit">
    <text evidence="1">Tetramer of two alpha and two beta chains.</text>
</comment>
<comment type="similarity">
    <text evidence="1">Belongs to the TrpA family.</text>
</comment>
<reference key="1">
    <citation type="journal article" date="2004" name="J. Bacteriol.">
        <title>Comparative genomics of two Leptospira interrogans serovars reveals novel insights into physiology and pathogenesis.</title>
        <authorList>
            <person name="Nascimento A.L.T.O."/>
            <person name="Ko A.I."/>
            <person name="Martins E.A.L."/>
            <person name="Monteiro-Vitorello C.B."/>
            <person name="Ho P.L."/>
            <person name="Haake D.A."/>
            <person name="Verjovski-Almeida S."/>
            <person name="Hartskeerl R.A."/>
            <person name="Marques M.V."/>
            <person name="Oliveira M.C."/>
            <person name="Menck C.F.M."/>
            <person name="Leite L.C.C."/>
            <person name="Carrer H."/>
            <person name="Coutinho L.L."/>
            <person name="Degrave W.M."/>
            <person name="Dellagostin O.A."/>
            <person name="El-Dorry H."/>
            <person name="Ferro E.S."/>
            <person name="Ferro M.I.T."/>
            <person name="Furlan L.R."/>
            <person name="Gamberini M."/>
            <person name="Giglioti E.A."/>
            <person name="Goes-Neto A."/>
            <person name="Goldman G.H."/>
            <person name="Goldman M.H.S."/>
            <person name="Harakava R."/>
            <person name="Jeronimo S.M.B."/>
            <person name="Junqueira-de-Azevedo I.L.M."/>
            <person name="Kimura E.T."/>
            <person name="Kuramae E.E."/>
            <person name="Lemos E.G.M."/>
            <person name="Lemos M.V.F."/>
            <person name="Marino C.L."/>
            <person name="Nunes L.R."/>
            <person name="de Oliveira R.C."/>
            <person name="Pereira G.G."/>
            <person name="Reis M.S."/>
            <person name="Schriefer A."/>
            <person name="Siqueira W.J."/>
            <person name="Sommer P."/>
            <person name="Tsai S.M."/>
            <person name="Simpson A.J.G."/>
            <person name="Ferro J.A."/>
            <person name="Camargo L.E.A."/>
            <person name="Kitajima J.P."/>
            <person name="Setubal J.C."/>
            <person name="Van Sluys M.A."/>
        </authorList>
    </citation>
    <scope>NUCLEOTIDE SEQUENCE [LARGE SCALE GENOMIC DNA]</scope>
    <source>
        <strain>Fiocruz L1-130</strain>
    </source>
</reference>
<name>TRPA_LEPIC</name>
<evidence type="ECO:0000255" key="1">
    <source>
        <dbReference type="HAMAP-Rule" id="MF_00131"/>
    </source>
</evidence>
<organism>
    <name type="scientific">Leptospira interrogans serogroup Icterohaemorrhagiae serovar copenhageni (strain Fiocruz L1-130)</name>
    <dbReference type="NCBI Taxonomy" id="267671"/>
    <lineage>
        <taxon>Bacteria</taxon>
        <taxon>Pseudomonadati</taxon>
        <taxon>Spirochaetota</taxon>
        <taxon>Spirochaetia</taxon>
        <taxon>Leptospirales</taxon>
        <taxon>Leptospiraceae</taxon>
        <taxon>Leptospira</taxon>
    </lineage>
</organism>
<accession>Q72U04</accession>
<proteinExistence type="inferred from homology"/>
<dbReference type="EC" id="4.2.1.20" evidence="1"/>
<dbReference type="EMBL" id="AE016823">
    <property type="protein sequence ID" value="AAS69474.1"/>
    <property type="molecule type" value="Genomic_DNA"/>
</dbReference>
<dbReference type="RefSeq" id="WP_001084828.1">
    <property type="nucleotide sequence ID" value="NC_005823.1"/>
</dbReference>
<dbReference type="SMR" id="Q72U04"/>
<dbReference type="GeneID" id="61144192"/>
<dbReference type="KEGG" id="lic:LIC_10860"/>
<dbReference type="HOGENOM" id="CLU_016734_0_0_12"/>
<dbReference type="UniPathway" id="UPA00035">
    <property type="reaction ID" value="UER00044"/>
</dbReference>
<dbReference type="Proteomes" id="UP000007037">
    <property type="component" value="Chromosome I"/>
</dbReference>
<dbReference type="GO" id="GO:0005829">
    <property type="term" value="C:cytosol"/>
    <property type="evidence" value="ECO:0007669"/>
    <property type="project" value="TreeGrafter"/>
</dbReference>
<dbReference type="GO" id="GO:0004834">
    <property type="term" value="F:tryptophan synthase activity"/>
    <property type="evidence" value="ECO:0007669"/>
    <property type="project" value="UniProtKB-UniRule"/>
</dbReference>
<dbReference type="CDD" id="cd04724">
    <property type="entry name" value="Tryptophan_synthase_alpha"/>
    <property type="match status" value="1"/>
</dbReference>
<dbReference type="FunFam" id="3.20.20.70:FF:000037">
    <property type="entry name" value="Tryptophan synthase alpha chain"/>
    <property type="match status" value="1"/>
</dbReference>
<dbReference type="Gene3D" id="3.20.20.70">
    <property type="entry name" value="Aldolase class I"/>
    <property type="match status" value="1"/>
</dbReference>
<dbReference type="HAMAP" id="MF_00131">
    <property type="entry name" value="Trp_synth_alpha"/>
    <property type="match status" value="1"/>
</dbReference>
<dbReference type="InterPro" id="IPR013785">
    <property type="entry name" value="Aldolase_TIM"/>
</dbReference>
<dbReference type="InterPro" id="IPR011060">
    <property type="entry name" value="RibuloseP-bd_barrel"/>
</dbReference>
<dbReference type="InterPro" id="IPR018204">
    <property type="entry name" value="Trp_synthase_alpha_AS"/>
</dbReference>
<dbReference type="InterPro" id="IPR002028">
    <property type="entry name" value="Trp_synthase_suA"/>
</dbReference>
<dbReference type="NCBIfam" id="TIGR00262">
    <property type="entry name" value="trpA"/>
    <property type="match status" value="1"/>
</dbReference>
<dbReference type="PANTHER" id="PTHR43406:SF1">
    <property type="entry name" value="TRYPTOPHAN SYNTHASE ALPHA CHAIN, CHLOROPLASTIC"/>
    <property type="match status" value="1"/>
</dbReference>
<dbReference type="PANTHER" id="PTHR43406">
    <property type="entry name" value="TRYPTOPHAN SYNTHASE, ALPHA CHAIN"/>
    <property type="match status" value="1"/>
</dbReference>
<dbReference type="Pfam" id="PF00290">
    <property type="entry name" value="Trp_syntA"/>
    <property type="match status" value="1"/>
</dbReference>
<dbReference type="SUPFAM" id="SSF51366">
    <property type="entry name" value="Ribulose-phoshate binding barrel"/>
    <property type="match status" value="1"/>
</dbReference>
<dbReference type="PROSITE" id="PS00167">
    <property type="entry name" value="TRP_SYNTHASE_ALPHA"/>
    <property type="match status" value="1"/>
</dbReference>
<sequence length="264" mass="29028">MNSISSVFSSEQSVFIPYISLGDPDYDSCVIWADALIRGGAGILELGIPFTDPVADGPVIQKAFKRSLAHPFSMDKILEVTSEIHKLHPQIPLVYLTYFNPLFSMGLESFTERAKNSGIQGLIIPDLPFDTPEAEEFFSQLERKRIDFIHLVTPATTEDRIRSMKSLASGFIYYVTSYGVTGERGSIASGLEDRIRMVRKIVGLPVCAGFGISTSDQSKVISTYADGVIIGSAVQRIIEENGSDRNNCADKLLAYASEIRASMR</sequence>
<feature type="chain" id="PRO_0000098801" description="Tryptophan synthase alpha chain">
    <location>
        <begin position="1"/>
        <end position="264"/>
    </location>
</feature>
<feature type="active site" description="Proton acceptor" evidence="1">
    <location>
        <position position="45"/>
    </location>
</feature>
<feature type="active site" description="Proton acceptor" evidence="1">
    <location>
        <position position="56"/>
    </location>
</feature>
<keyword id="KW-0028">Amino-acid biosynthesis</keyword>
<keyword id="KW-0057">Aromatic amino acid biosynthesis</keyword>
<keyword id="KW-0456">Lyase</keyword>
<keyword id="KW-0822">Tryptophan biosynthesis</keyword>
<gene>
    <name evidence="1" type="primary">trpA</name>
    <name type="ordered locus">LIC_10860</name>
</gene>
<protein>
    <recommendedName>
        <fullName evidence="1">Tryptophan synthase alpha chain</fullName>
        <ecNumber evidence="1">4.2.1.20</ecNumber>
    </recommendedName>
</protein>